<keyword id="KW-1185">Reference proteome</keyword>
<keyword id="KW-0808">Transferase</keyword>
<keyword id="KW-0833">Ubl conjugation pathway</keyword>
<comment type="function">
    <text evidence="1">E3 UFM1-protein ligase that mediates ufmylation of target proteins.</text>
</comment>
<comment type="similarity">
    <text evidence="3">Belongs to the UFL1 family.</text>
</comment>
<evidence type="ECO:0000250" key="1">
    <source>
        <dbReference type="UniProtKB" id="O94874"/>
    </source>
</evidence>
<evidence type="ECO:0000256" key="2">
    <source>
        <dbReference type="SAM" id="MobiDB-lite"/>
    </source>
</evidence>
<evidence type="ECO:0000305" key="3"/>
<sequence>MTSDWDEIKRLAADFQKAQLSTSLQRLSERNCVEVVSLLIEKGLLEVIFTTDGKEYLTQAHLAQEVKDELFVQGGRVNLVDLAKTLNVDFDRVQRVAEQVVQEDPSVKFVLGQLLDVSYFERVAMEVNEKLAQAGEINVADLTMQYDLPADFILSNIVLKYLNKIIMGKQDASNANIFFTQSYVTRSKAKIRGALAAITKPTPVSAILAQCGIPDRLFNMLVNEVATLGSVTSRSPGAQYIPHIYRKTQVDWVQNFYRQNGYLEHDSVAGLGVTDVKNFITNQLPEAKIIHLKKCSVGEKLIDQVVASLEECLSSNTYLDVSTILPSIMTDEDIDQLLSMVLTAAMQKQTLIFGSTILTTKFVDDIIKPCYGIAEEHAKRSVDSGSYQQYMAEKLMKHQDPMDRDSAVGEGKADKREERRKKAAGGKGGGGTQGRETKTKSTKKHVRGQKGNVSDSDDDMPSGGKKGGKDAVIELITTKEIAKVLEAGLEPEGLEDLSKQLAQHYYPQFSKLALAKAHQLYEISLHQSNQNRRQTHASLQDKLNNLYNDIRLYEKGIKLFPADVQPQLVKYLLKSLGTDFSNEICFYVAAECNLNSNGTTLTVEQRNKIVQECSQEYKSALQALNKAVFSSASIDDFLDVAESALQACSMILKKIDKKKDRNLILCHKHGLLEQLANCSDPALVLHLAVLIIFTICTQSMLHASGRHVSSILSFLQPQLSPEQAQTLTSYHDLVLKLLSAEGSSSNVDDITKQLEDLTPTVKSIASSFKKSGVTSAE</sequence>
<proteinExistence type="inferred from homology"/>
<organism>
    <name type="scientific">Aedes aegypti</name>
    <name type="common">Yellowfever mosquito</name>
    <name type="synonym">Culex aegypti</name>
    <dbReference type="NCBI Taxonomy" id="7159"/>
    <lineage>
        <taxon>Eukaryota</taxon>
        <taxon>Metazoa</taxon>
        <taxon>Ecdysozoa</taxon>
        <taxon>Arthropoda</taxon>
        <taxon>Hexapoda</taxon>
        <taxon>Insecta</taxon>
        <taxon>Pterygota</taxon>
        <taxon>Neoptera</taxon>
        <taxon>Endopterygota</taxon>
        <taxon>Diptera</taxon>
        <taxon>Nematocera</taxon>
        <taxon>Culicoidea</taxon>
        <taxon>Culicidae</taxon>
        <taxon>Culicinae</taxon>
        <taxon>Aedini</taxon>
        <taxon>Aedes</taxon>
        <taxon>Stegomyia</taxon>
    </lineage>
</organism>
<protein>
    <recommendedName>
        <fullName>E3 UFM1-protein ligase 1 homolog</fullName>
        <ecNumber>2.3.2.-</ecNumber>
    </recommendedName>
    <alternativeName>
        <fullName evidence="3">E3 UFM1-protein transferase 1 homolog</fullName>
    </alternativeName>
</protein>
<dbReference type="EC" id="2.3.2.-"/>
<dbReference type="EMBL" id="CH477274">
    <property type="protein sequence ID" value="EAT45195.1"/>
    <property type="molecule type" value="Genomic_DNA"/>
</dbReference>
<dbReference type="RefSeq" id="XP_001656941.1">
    <property type="nucleotide sequence ID" value="XM_001656891.1"/>
</dbReference>
<dbReference type="SMR" id="Q0IG18"/>
<dbReference type="FunCoup" id="Q0IG18">
    <property type="interactions" value="2440"/>
</dbReference>
<dbReference type="STRING" id="7159.Q0IG18"/>
<dbReference type="PaxDb" id="7159-AAEL003536-PA"/>
<dbReference type="GeneID" id="5578370"/>
<dbReference type="KEGG" id="aag:5578370"/>
<dbReference type="CTD" id="23376"/>
<dbReference type="VEuPathDB" id="VectorBase:AAEL003536"/>
<dbReference type="eggNOG" id="KOG2235">
    <property type="taxonomic scope" value="Eukaryota"/>
</dbReference>
<dbReference type="HOGENOM" id="CLU_012417_1_1_1"/>
<dbReference type="InParanoid" id="Q0IG18"/>
<dbReference type="OMA" id="CILHASG"/>
<dbReference type="OrthoDB" id="10258297at2759"/>
<dbReference type="PhylomeDB" id="Q0IG18"/>
<dbReference type="Proteomes" id="UP000008820">
    <property type="component" value="Unassembled WGS sequence"/>
</dbReference>
<dbReference type="Proteomes" id="UP000682892">
    <property type="component" value="Chromosome 1"/>
</dbReference>
<dbReference type="GO" id="GO:0005789">
    <property type="term" value="C:endoplasmic reticulum membrane"/>
    <property type="evidence" value="ECO:0007669"/>
    <property type="project" value="TreeGrafter"/>
</dbReference>
<dbReference type="GO" id="GO:0061666">
    <property type="term" value="F:UFM1 ligase activity"/>
    <property type="evidence" value="ECO:0007669"/>
    <property type="project" value="InterPro"/>
</dbReference>
<dbReference type="GO" id="GO:1990592">
    <property type="term" value="P:protein K69-linked ufmylation"/>
    <property type="evidence" value="ECO:0007669"/>
    <property type="project" value="TreeGrafter"/>
</dbReference>
<dbReference type="GO" id="GO:0032434">
    <property type="term" value="P:regulation of proteasomal ubiquitin-dependent protein catabolic process"/>
    <property type="evidence" value="ECO:0007669"/>
    <property type="project" value="TreeGrafter"/>
</dbReference>
<dbReference type="GO" id="GO:0034976">
    <property type="term" value="P:response to endoplasmic reticulum stress"/>
    <property type="evidence" value="ECO:0007669"/>
    <property type="project" value="TreeGrafter"/>
</dbReference>
<dbReference type="InterPro" id="IPR018611">
    <property type="entry name" value="Ufl1"/>
</dbReference>
<dbReference type="InterPro" id="IPR056761">
    <property type="entry name" value="Ufl1-like_C"/>
</dbReference>
<dbReference type="InterPro" id="IPR056580">
    <property type="entry name" value="Ufl1_dom"/>
</dbReference>
<dbReference type="InterPro" id="IPR056579">
    <property type="entry name" value="Ufl1_N"/>
</dbReference>
<dbReference type="PANTHER" id="PTHR31057">
    <property type="entry name" value="E3 UFM1-PROTEIN LIGASE 1"/>
    <property type="match status" value="1"/>
</dbReference>
<dbReference type="PANTHER" id="PTHR31057:SF0">
    <property type="entry name" value="E3 UFM1-PROTEIN LIGASE 1"/>
    <property type="match status" value="1"/>
</dbReference>
<dbReference type="Pfam" id="PF09743">
    <property type="entry name" value="E3_UFM1_ligase"/>
    <property type="match status" value="1"/>
</dbReference>
<dbReference type="Pfam" id="PF23659">
    <property type="entry name" value="UFL1"/>
    <property type="match status" value="1"/>
</dbReference>
<dbReference type="Pfam" id="PF25041">
    <property type="entry name" value="UFL1_C"/>
    <property type="match status" value="1"/>
</dbReference>
<feature type="chain" id="PRO_0000391876" description="E3 UFM1-protein ligase 1 homolog">
    <location>
        <begin position="1"/>
        <end position="777"/>
    </location>
</feature>
<feature type="region of interest" description="Disordered" evidence="2">
    <location>
        <begin position="396"/>
        <end position="470"/>
    </location>
</feature>
<feature type="compositionally biased region" description="Basic and acidic residues" evidence="2">
    <location>
        <begin position="396"/>
        <end position="417"/>
    </location>
</feature>
<name>UFL1_AEDAE</name>
<gene>
    <name type="ORF">AAEL003536</name>
</gene>
<reference key="1">
    <citation type="journal article" date="2007" name="Science">
        <title>Genome sequence of Aedes aegypti, a major arbovirus vector.</title>
        <authorList>
            <person name="Nene V."/>
            <person name="Wortman J.R."/>
            <person name="Lawson D."/>
            <person name="Haas B.J."/>
            <person name="Kodira C.D."/>
            <person name="Tu Z.J."/>
            <person name="Loftus B.J."/>
            <person name="Xi Z."/>
            <person name="Megy K."/>
            <person name="Grabherr M."/>
            <person name="Ren Q."/>
            <person name="Zdobnov E.M."/>
            <person name="Lobo N.F."/>
            <person name="Campbell K.S."/>
            <person name="Brown S.E."/>
            <person name="Bonaldo M.F."/>
            <person name="Zhu J."/>
            <person name="Sinkins S.P."/>
            <person name="Hogenkamp D.G."/>
            <person name="Amedeo P."/>
            <person name="Arensburger P."/>
            <person name="Atkinson P.W."/>
            <person name="Bidwell S.L."/>
            <person name="Biedler J."/>
            <person name="Birney E."/>
            <person name="Bruggner R.V."/>
            <person name="Costas J."/>
            <person name="Coy M.R."/>
            <person name="Crabtree J."/>
            <person name="Crawford M."/>
            <person name="DeBruyn B."/>
            <person name="DeCaprio D."/>
            <person name="Eiglmeier K."/>
            <person name="Eisenstadt E."/>
            <person name="El-Dorry H."/>
            <person name="Gelbart W.M."/>
            <person name="Gomes S.L."/>
            <person name="Hammond M."/>
            <person name="Hannick L.I."/>
            <person name="Hogan J.R."/>
            <person name="Holmes M.H."/>
            <person name="Jaffe D."/>
            <person name="Johnston S.J."/>
            <person name="Kennedy R.C."/>
            <person name="Koo H."/>
            <person name="Kravitz S."/>
            <person name="Kriventseva E.V."/>
            <person name="Kulp D."/>
            <person name="Labutti K."/>
            <person name="Lee E."/>
            <person name="Li S."/>
            <person name="Lovin D.D."/>
            <person name="Mao C."/>
            <person name="Mauceli E."/>
            <person name="Menck C.F."/>
            <person name="Miller J.R."/>
            <person name="Montgomery P."/>
            <person name="Mori A."/>
            <person name="Nascimento A.L."/>
            <person name="Naveira H.F."/>
            <person name="Nusbaum C."/>
            <person name="O'Leary S.B."/>
            <person name="Orvis J."/>
            <person name="Pertea M."/>
            <person name="Quesneville H."/>
            <person name="Reidenbach K.R."/>
            <person name="Rogers Y.-H.C."/>
            <person name="Roth C.W."/>
            <person name="Schneider J.R."/>
            <person name="Schatz M."/>
            <person name="Shumway M."/>
            <person name="Stanke M."/>
            <person name="Stinson E.O."/>
            <person name="Tubio J.M.C."/>
            <person name="Vanzee J.P."/>
            <person name="Verjovski-Almeida S."/>
            <person name="Werner D."/>
            <person name="White O.R."/>
            <person name="Wyder S."/>
            <person name="Zeng Q."/>
            <person name="Zhao Q."/>
            <person name="Zhao Y."/>
            <person name="Hill C.A."/>
            <person name="Raikhel A.S."/>
            <person name="Soares M.B."/>
            <person name="Knudson D.L."/>
            <person name="Lee N.H."/>
            <person name="Galagan J."/>
            <person name="Salzberg S.L."/>
            <person name="Paulsen I.T."/>
            <person name="Dimopoulos G."/>
            <person name="Collins F.H."/>
            <person name="Bruce B."/>
            <person name="Fraser-Liggett C.M."/>
            <person name="Severson D.W."/>
        </authorList>
    </citation>
    <scope>NUCLEOTIDE SEQUENCE [LARGE SCALE GENOMIC DNA]</scope>
    <source>
        <strain>LVPib12</strain>
    </source>
</reference>
<accession>Q0IG18</accession>